<protein>
    <recommendedName>
        <fullName evidence="1">Glucokinase</fullName>
        <ecNumber evidence="1">2.7.1.2</ecNumber>
    </recommendedName>
    <alternativeName>
        <fullName evidence="1">Glucose kinase</fullName>
    </alternativeName>
</protein>
<organism>
    <name type="scientific">Aromatoleum aromaticum (strain DSM 19018 / LMG 30748 / EbN1)</name>
    <name type="common">Azoarcus sp. (strain EbN1)</name>
    <dbReference type="NCBI Taxonomy" id="76114"/>
    <lineage>
        <taxon>Bacteria</taxon>
        <taxon>Pseudomonadati</taxon>
        <taxon>Pseudomonadota</taxon>
        <taxon>Betaproteobacteria</taxon>
        <taxon>Rhodocyclales</taxon>
        <taxon>Rhodocyclaceae</taxon>
        <taxon>Aromatoleum</taxon>
    </lineage>
</organism>
<reference key="1">
    <citation type="journal article" date="2005" name="Arch. Microbiol.">
        <title>The genome sequence of an anaerobic aromatic-degrading denitrifying bacterium, strain EbN1.</title>
        <authorList>
            <person name="Rabus R."/>
            <person name="Kube M."/>
            <person name="Heider J."/>
            <person name="Beck A."/>
            <person name="Heitmann K."/>
            <person name="Widdel F."/>
            <person name="Reinhardt R."/>
        </authorList>
    </citation>
    <scope>NUCLEOTIDE SEQUENCE [LARGE SCALE GENOMIC DNA]</scope>
    <source>
        <strain>DSM 19018 / LMG 30748 / EbN1</strain>
    </source>
</reference>
<evidence type="ECO:0000255" key="1">
    <source>
        <dbReference type="HAMAP-Rule" id="MF_00524"/>
    </source>
</evidence>
<sequence length="331" mass="34624">MPTGCSDTYPRLIGDIGGTHARFAVIDSPGSPPTRFRTLCCDDHAGLLEAVQAYLLLERGLAGPRVAAFGIANPVEGDRVRMTNHDWSFSIEQLRIELGLARLVVLNDFTALALSLPRLQAGERRQIGGGNECAGRPVALIGPGTGLGVSGLVRCGNGYAPLEGEGGHVTLAASTPREAELIAVLAARFDHVSAERALSGPGLIALHDAIRQLAGAPPLALEADEISARAMAASCPWCAEALQVFCGMLGSVAGDLALTLGAFGGVYIGGGIVPKLGDFFDRSDFRRRFEQKGRFSEYLARIPCYVILAEYPALLGAATALDNALAGETGT</sequence>
<gene>
    <name evidence="1" type="primary">glk</name>
    <name type="ordered locus">AZOSEA03030</name>
    <name type="ORF">ebA584</name>
</gene>
<proteinExistence type="inferred from homology"/>
<dbReference type="EC" id="2.7.1.2" evidence="1"/>
<dbReference type="EMBL" id="CR555306">
    <property type="protein sequence ID" value="CAI06425.1"/>
    <property type="molecule type" value="Genomic_DNA"/>
</dbReference>
<dbReference type="RefSeq" id="WP_011236160.1">
    <property type="nucleotide sequence ID" value="NC_006513.1"/>
</dbReference>
<dbReference type="SMR" id="Q5P8D4"/>
<dbReference type="STRING" id="76114.ebA584"/>
<dbReference type="KEGG" id="eba:ebA584"/>
<dbReference type="eggNOG" id="COG0837">
    <property type="taxonomic scope" value="Bacteria"/>
</dbReference>
<dbReference type="HOGENOM" id="CLU_042582_1_0_4"/>
<dbReference type="OrthoDB" id="257751at2"/>
<dbReference type="Proteomes" id="UP000006552">
    <property type="component" value="Chromosome"/>
</dbReference>
<dbReference type="GO" id="GO:0005829">
    <property type="term" value="C:cytosol"/>
    <property type="evidence" value="ECO:0007669"/>
    <property type="project" value="TreeGrafter"/>
</dbReference>
<dbReference type="GO" id="GO:0005524">
    <property type="term" value="F:ATP binding"/>
    <property type="evidence" value="ECO:0007669"/>
    <property type="project" value="UniProtKB-UniRule"/>
</dbReference>
<dbReference type="GO" id="GO:0005536">
    <property type="term" value="F:D-glucose binding"/>
    <property type="evidence" value="ECO:0007669"/>
    <property type="project" value="InterPro"/>
</dbReference>
<dbReference type="GO" id="GO:0004340">
    <property type="term" value="F:glucokinase activity"/>
    <property type="evidence" value="ECO:0007669"/>
    <property type="project" value="UniProtKB-UniRule"/>
</dbReference>
<dbReference type="GO" id="GO:0006096">
    <property type="term" value="P:glycolytic process"/>
    <property type="evidence" value="ECO:0007669"/>
    <property type="project" value="UniProtKB-UniRule"/>
</dbReference>
<dbReference type="CDD" id="cd24008">
    <property type="entry name" value="ASKHA_NBD_GLK"/>
    <property type="match status" value="1"/>
</dbReference>
<dbReference type="Gene3D" id="3.30.420.40">
    <property type="match status" value="1"/>
</dbReference>
<dbReference type="Gene3D" id="3.40.367.20">
    <property type="match status" value="1"/>
</dbReference>
<dbReference type="HAMAP" id="MF_00524">
    <property type="entry name" value="Glucokinase"/>
    <property type="match status" value="1"/>
</dbReference>
<dbReference type="InterPro" id="IPR043129">
    <property type="entry name" value="ATPase_NBD"/>
</dbReference>
<dbReference type="InterPro" id="IPR050201">
    <property type="entry name" value="Bacterial_glucokinase"/>
</dbReference>
<dbReference type="InterPro" id="IPR003836">
    <property type="entry name" value="Glucokinase"/>
</dbReference>
<dbReference type="NCBIfam" id="TIGR00749">
    <property type="entry name" value="glk"/>
    <property type="match status" value="1"/>
</dbReference>
<dbReference type="NCBIfam" id="NF001416">
    <property type="entry name" value="PRK00292.1-3"/>
    <property type="match status" value="1"/>
</dbReference>
<dbReference type="PANTHER" id="PTHR47690">
    <property type="entry name" value="GLUCOKINASE"/>
    <property type="match status" value="1"/>
</dbReference>
<dbReference type="PANTHER" id="PTHR47690:SF1">
    <property type="entry name" value="GLUCOKINASE"/>
    <property type="match status" value="1"/>
</dbReference>
<dbReference type="Pfam" id="PF02685">
    <property type="entry name" value="Glucokinase"/>
    <property type="match status" value="1"/>
</dbReference>
<dbReference type="SUPFAM" id="SSF53067">
    <property type="entry name" value="Actin-like ATPase domain"/>
    <property type="match status" value="1"/>
</dbReference>
<keyword id="KW-0067">ATP-binding</keyword>
<keyword id="KW-0963">Cytoplasm</keyword>
<keyword id="KW-0324">Glycolysis</keyword>
<keyword id="KW-0418">Kinase</keyword>
<keyword id="KW-0547">Nucleotide-binding</keyword>
<keyword id="KW-1185">Reference proteome</keyword>
<keyword id="KW-0808">Transferase</keyword>
<accession>Q5P8D4</accession>
<name>GLK_AROAE</name>
<comment type="catalytic activity">
    <reaction evidence="1">
        <text>D-glucose + ATP = D-glucose 6-phosphate + ADP + H(+)</text>
        <dbReference type="Rhea" id="RHEA:17825"/>
        <dbReference type="ChEBI" id="CHEBI:4167"/>
        <dbReference type="ChEBI" id="CHEBI:15378"/>
        <dbReference type="ChEBI" id="CHEBI:30616"/>
        <dbReference type="ChEBI" id="CHEBI:61548"/>
        <dbReference type="ChEBI" id="CHEBI:456216"/>
        <dbReference type="EC" id="2.7.1.2"/>
    </reaction>
</comment>
<comment type="subcellular location">
    <subcellularLocation>
        <location evidence="1">Cytoplasm</location>
    </subcellularLocation>
</comment>
<comment type="similarity">
    <text evidence="1">Belongs to the bacterial glucokinase family.</text>
</comment>
<feature type="chain" id="PRO_0000268767" description="Glucokinase">
    <location>
        <begin position="1"/>
        <end position="331"/>
    </location>
</feature>
<feature type="binding site" evidence="1">
    <location>
        <begin position="14"/>
        <end position="19"/>
    </location>
    <ligand>
        <name>ATP</name>
        <dbReference type="ChEBI" id="CHEBI:30616"/>
    </ligand>
</feature>